<sequence>MGMRMMFTLFLLAVLSTTVVSFTLDRASNGRDAAADSKAADQIAQTVRDECCSNPSCAQTHPEICRRTLMLQNPLNHDMSPSA</sequence>
<evidence type="ECO:0000250" key="1">
    <source>
        <dbReference type="UniProtKB" id="P56636"/>
    </source>
</evidence>
<evidence type="ECO:0000255" key="2"/>
<evidence type="ECO:0000269" key="3">
    <source>
    </source>
</evidence>
<evidence type="ECO:0000303" key="4">
    <source>
    </source>
</evidence>
<evidence type="ECO:0000305" key="5"/>
<evidence type="ECO:0000305" key="6">
    <source>
    </source>
</evidence>
<evidence type="ECO:0000312" key="7">
    <source>
        <dbReference type="EMBL" id="AGK23189.1"/>
    </source>
</evidence>
<keyword id="KW-0008">Acetylcholine receptor inhibiting toxin</keyword>
<keyword id="KW-1015">Disulfide bond</keyword>
<keyword id="KW-0872">Ion channel impairing toxin</keyword>
<keyword id="KW-0528">Neurotoxin</keyword>
<keyword id="KW-0629">Postsynaptic neurotoxin</keyword>
<keyword id="KW-0964">Secreted</keyword>
<keyword id="KW-0732">Signal</keyword>
<keyword id="KW-0800">Toxin</keyword>
<accession>S4UJW3</accession>
<proteinExistence type="inferred from homology"/>
<dbReference type="EMBL" id="JX293449">
    <property type="protein sequence ID" value="AGK23189.1"/>
    <property type="molecule type" value="mRNA"/>
</dbReference>
<dbReference type="GO" id="GO:0005576">
    <property type="term" value="C:extracellular region"/>
    <property type="evidence" value="ECO:0007669"/>
    <property type="project" value="UniProtKB-SubCell"/>
</dbReference>
<dbReference type="GO" id="GO:0035792">
    <property type="term" value="C:host cell postsynaptic membrane"/>
    <property type="evidence" value="ECO:0007669"/>
    <property type="project" value="UniProtKB-KW"/>
</dbReference>
<dbReference type="GO" id="GO:0030550">
    <property type="term" value="F:acetylcholine receptor inhibitor activity"/>
    <property type="evidence" value="ECO:0007669"/>
    <property type="project" value="UniProtKB-KW"/>
</dbReference>
<dbReference type="GO" id="GO:0099106">
    <property type="term" value="F:ion channel regulator activity"/>
    <property type="evidence" value="ECO:0007669"/>
    <property type="project" value="UniProtKB-KW"/>
</dbReference>
<dbReference type="GO" id="GO:0090729">
    <property type="term" value="F:toxin activity"/>
    <property type="evidence" value="ECO:0007669"/>
    <property type="project" value="UniProtKB-KW"/>
</dbReference>
<dbReference type="InterPro" id="IPR009958">
    <property type="entry name" value="Conotoxin_a-typ"/>
</dbReference>
<dbReference type="Pfam" id="PF07365">
    <property type="entry name" value="Toxin_8"/>
    <property type="match status" value="1"/>
</dbReference>
<feature type="signal peptide" evidence="2">
    <location>
        <begin position="1"/>
        <end position="21"/>
    </location>
</feature>
<feature type="propeptide" id="PRO_0000455817" evidence="5">
    <location>
        <begin position="22"/>
        <end position="48"/>
    </location>
</feature>
<feature type="peptide" id="PRO_5004533488" description="Alpha-conotoxin QcIA" evidence="6">
    <location>
        <begin position="49"/>
        <end position="65"/>
    </location>
</feature>
<feature type="propeptide" id="PRO_0000455818" evidence="5">
    <location>
        <begin position="66"/>
        <end position="83"/>
    </location>
</feature>
<feature type="region of interest" description="Ser-Xaa-Pro motif, crucial for potent interaction with nAChR" evidence="1">
    <location>
        <begin position="53"/>
        <end position="55"/>
    </location>
</feature>
<feature type="disulfide bond" evidence="1">
    <location>
        <begin position="51"/>
        <end position="57"/>
    </location>
</feature>
<feature type="disulfide bond" evidence="1">
    <location>
        <begin position="52"/>
        <end position="65"/>
    </location>
</feature>
<reference evidence="7" key="1">
    <citation type="journal article" date="2019" name="Mar. Drugs">
        <title>High-throughput identification and analysis of novel conotoxins from three vermivorous cone snails by transcriptome sequencing.</title>
        <authorList>
            <person name="Yao G."/>
            <person name="Peng C."/>
            <person name="Zhu Y."/>
            <person name="Fan C."/>
            <person name="Jiang H."/>
            <person name="Chen J."/>
            <person name="Cao Y."/>
            <person name="Shi Q."/>
        </authorList>
    </citation>
    <scope>NUCLEOTIDE SEQUENCE [MRNA]</scope>
    <source>
        <tissue>Venom duct</tissue>
    </source>
</reference>
<reference key="2">
    <citation type="journal article" date="2022" name="Mar. Drugs">
        <title>A novel alpha4/7-conotoxin QuIA selectively inhibits alpha3beta2 and alpha6/alpha3beta4 nicotinic acetylcholine receptor subtypes with high efficacy.</title>
        <authorList>
            <person name="Wang L."/>
            <person name="Wu X."/>
            <person name="Zhu X."/>
            <person name="Zhangsun D."/>
            <person name="Wu Y."/>
            <person name="Luo S."/>
        </authorList>
    </citation>
    <scope>FUNCTION</scope>
    <scope>SYNTHESIS OF 49-65 OF AN AMIDATED PEPTIDE</scope>
</reference>
<organism>
    <name type="scientific">Conus quercinus</name>
    <name type="common">Oak cone</name>
    <dbReference type="NCBI Taxonomy" id="101313"/>
    <lineage>
        <taxon>Eukaryota</taxon>
        <taxon>Metazoa</taxon>
        <taxon>Spiralia</taxon>
        <taxon>Lophotrochozoa</taxon>
        <taxon>Mollusca</taxon>
        <taxon>Gastropoda</taxon>
        <taxon>Caenogastropoda</taxon>
        <taxon>Neogastropoda</taxon>
        <taxon>Conoidea</taxon>
        <taxon>Conidae</taxon>
        <taxon>Conus</taxon>
        <taxon>Lividoconus</taxon>
    </lineage>
</organism>
<comment type="function">
    <text evidence="3">Alpha-conotoxins bind to the nicotinic acetylcholine receptors (nAChR) and inhibit them. A synthetic amidated version of this toxin potently and preferentially antagonizes neuronal rat alpha-3-beta-2 (IC(50)=55.7 nM) and alpha-6/alpha-3-beta-4 (IC(50)=90.69 nM) nAChRs.</text>
</comment>
<comment type="subcellular location">
    <subcellularLocation>
        <location evidence="3">Secreted</location>
    </subcellularLocation>
</comment>
<comment type="tissue specificity">
    <text evidence="6">Expressed by the venom duct.</text>
</comment>
<comment type="domain">
    <text evidence="5">The cysteine framework is I (CC-C-C). Alpha4/7 pattern.</text>
</comment>
<comment type="miscellaneous">
    <text evidence="3">Negative results: shows no or weak inhibitory activity on a range of nAChRs subtypes, including human and rat alpha-9-alpha-10, mouse alpha-1-beta-1-delta-epsilon, rat alpha-7, rat alpha-6/alpha-3-beta-2-beta-3, rat alpha-3-beta-4, rat alpha-4-beta-2, and rat alpha-9-alpha-10.</text>
</comment>
<comment type="similarity">
    <text evidence="5">Belongs to the conotoxin A superfamily.</text>
</comment>
<protein>
    <recommendedName>
        <fullName evidence="5">Alpha-conotoxin QcIA</fullName>
    </recommendedName>
    <alternativeName>
        <fullName evidence="7">A superfamily conotoxin Qc1.11</fullName>
    </alternativeName>
    <alternativeName>
        <fullName evidence="5">A superfamily conotoxin Qc1.16</fullName>
    </alternativeName>
    <alternativeName>
        <fullName evidence="4">Alpha4/7-conotoxin QuIA</fullName>
    </alternativeName>
</protein>
<name>CA1A_CONQU</name>